<reference key="1">
    <citation type="journal article" date="2004" name="Nat. Genet.">
        <title>Complete sequencing and characterization of 21,243 full-length human cDNAs.</title>
        <authorList>
            <person name="Ota T."/>
            <person name="Suzuki Y."/>
            <person name="Nishikawa T."/>
            <person name="Otsuki T."/>
            <person name="Sugiyama T."/>
            <person name="Irie R."/>
            <person name="Wakamatsu A."/>
            <person name="Hayashi K."/>
            <person name="Sato H."/>
            <person name="Nagai K."/>
            <person name="Kimura K."/>
            <person name="Makita H."/>
            <person name="Sekine M."/>
            <person name="Obayashi M."/>
            <person name="Nishi T."/>
            <person name="Shibahara T."/>
            <person name="Tanaka T."/>
            <person name="Ishii S."/>
            <person name="Yamamoto J."/>
            <person name="Saito K."/>
            <person name="Kawai Y."/>
            <person name="Isono Y."/>
            <person name="Nakamura Y."/>
            <person name="Nagahari K."/>
            <person name="Murakami K."/>
            <person name="Yasuda T."/>
            <person name="Iwayanagi T."/>
            <person name="Wagatsuma M."/>
            <person name="Shiratori A."/>
            <person name="Sudo H."/>
            <person name="Hosoiri T."/>
            <person name="Kaku Y."/>
            <person name="Kodaira H."/>
            <person name="Kondo H."/>
            <person name="Sugawara M."/>
            <person name="Takahashi M."/>
            <person name="Kanda K."/>
            <person name="Yokoi T."/>
            <person name="Furuya T."/>
            <person name="Kikkawa E."/>
            <person name="Omura Y."/>
            <person name="Abe K."/>
            <person name="Kamihara K."/>
            <person name="Katsuta N."/>
            <person name="Sato K."/>
            <person name="Tanikawa M."/>
            <person name="Yamazaki M."/>
            <person name="Ninomiya K."/>
            <person name="Ishibashi T."/>
            <person name="Yamashita H."/>
            <person name="Murakawa K."/>
            <person name="Fujimori K."/>
            <person name="Tanai H."/>
            <person name="Kimata M."/>
            <person name="Watanabe M."/>
            <person name="Hiraoka S."/>
            <person name="Chiba Y."/>
            <person name="Ishida S."/>
            <person name="Ono Y."/>
            <person name="Takiguchi S."/>
            <person name="Watanabe S."/>
            <person name="Yosida M."/>
            <person name="Hotuta T."/>
            <person name="Kusano J."/>
            <person name="Kanehori K."/>
            <person name="Takahashi-Fujii A."/>
            <person name="Hara H."/>
            <person name="Tanase T.-O."/>
            <person name="Nomura Y."/>
            <person name="Togiya S."/>
            <person name="Komai F."/>
            <person name="Hara R."/>
            <person name="Takeuchi K."/>
            <person name="Arita M."/>
            <person name="Imose N."/>
            <person name="Musashino K."/>
            <person name="Yuuki H."/>
            <person name="Oshima A."/>
            <person name="Sasaki N."/>
            <person name="Aotsuka S."/>
            <person name="Yoshikawa Y."/>
            <person name="Matsunawa H."/>
            <person name="Ichihara T."/>
            <person name="Shiohata N."/>
            <person name="Sano S."/>
            <person name="Moriya S."/>
            <person name="Momiyama H."/>
            <person name="Satoh N."/>
            <person name="Takami S."/>
            <person name="Terashima Y."/>
            <person name="Suzuki O."/>
            <person name="Nakagawa S."/>
            <person name="Senoh A."/>
            <person name="Mizoguchi H."/>
            <person name="Goto Y."/>
            <person name="Shimizu F."/>
            <person name="Wakebe H."/>
            <person name="Hishigaki H."/>
            <person name="Watanabe T."/>
            <person name="Sugiyama A."/>
            <person name="Takemoto M."/>
            <person name="Kawakami B."/>
            <person name="Yamazaki M."/>
            <person name="Watanabe K."/>
            <person name="Kumagai A."/>
            <person name="Itakura S."/>
            <person name="Fukuzumi Y."/>
            <person name="Fujimori Y."/>
            <person name="Komiyama M."/>
            <person name="Tashiro H."/>
            <person name="Tanigami A."/>
            <person name="Fujiwara T."/>
            <person name="Ono T."/>
            <person name="Yamada K."/>
            <person name="Fujii Y."/>
            <person name="Ozaki K."/>
            <person name="Hirao M."/>
            <person name="Ohmori Y."/>
            <person name="Kawabata A."/>
            <person name="Hikiji T."/>
            <person name="Kobatake N."/>
            <person name="Inagaki H."/>
            <person name="Ikema Y."/>
            <person name="Okamoto S."/>
            <person name="Okitani R."/>
            <person name="Kawakami T."/>
            <person name="Noguchi S."/>
            <person name="Itoh T."/>
            <person name="Shigeta K."/>
            <person name="Senba T."/>
            <person name="Matsumura K."/>
            <person name="Nakajima Y."/>
            <person name="Mizuno T."/>
            <person name="Morinaga M."/>
            <person name="Sasaki M."/>
            <person name="Togashi T."/>
            <person name="Oyama M."/>
            <person name="Hata H."/>
            <person name="Watanabe M."/>
            <person name="Komatsu T."/>
            <person name="Mizushima-Sugano J."/>
            <person name="Satoh T."/>
            <person name="Shirai Y."/>
            <person name="Takahashi Y."/>
            <person name="Nakagawa K."/>
            <person name="Okumura K."/>
            <person name="Nagase T."/>
            <person name="Nomura N."/>
            <person name="Kikuchi H."/>
            <person name="Masuho Y."/>
            <person name="Yamashita R."/>
            <person name="Nakai K."/>
            <person name="Yada T."/>
            <person name="Nakamura Y."/>
            <person name="Ohara O."/>
            <person name="Isogai T."/>
            <person name="Sugano S."/>
        </authorList>
    </citation>
    <scope>NUCLEOTIDE SEQUENCE [LARGE SCALE MRNA]</scope>
    <source>
        <tissue>Hippocampus</tissue>
    </source>
</reference>
<reference key="2">
    <citation type="journal article" date="2006" name="Nature">
        <title>Analysis of the DNA sequence and duplication history of human chromosome 15.</title>
        <authorList>
            <person name="Zody M.C."/>
            <person name="Garber M."/>
            <person name="Sharpe T."/>
            <person name="Young S.K."/>
            <person name="Rowen L."/>
            <person name="O'Neill K."/>
            <person name="Whittaker C.A."/>
            <person name="Kamal M."/>
            <person name="Chang J.L."/>
            <person name="Cuomo C.A."/>
            <person name="Dewar K."/>
            <person name="FitzGerald M.G."/>
            <person name="Kodira C.D."/>
            <person name="Madan A."/>
            <person name="Qin S."/>
            <person name="Yang X."/>
            <person name="Abbasi N."/>
            <person name="Abouelleil A."/>
            <person name="Arachchi H.M."/>
            <person name="Baradarani L."/>
            <person name="Birditt B."/>
            <person name="Bloom S."/>
            <person name="Bloom T."/>
            <person name="Borowsky M.L."/>
            <person name="Burke J."/>
            <person name="Butler J."/>
            <person name="Cook A."/>
            <person name="DeArellano K."/>
            <person name="DeCaprio D."/>
            <person name="Dorris L. III"/>
            <person name="Dors M."/>
            <person name="Eichler E.E."/>
            <person name="Engels R."/>
            <person name="Fahey J."/>
            <person name="Fleetwood P."/>
            <person name="Friedman C."/>
            <person name="Gearin G."/>
            <person name="Hall J.L."/>
            <person name="Hensley G."/>
            <person name="Johnson E."/>
            <person name="Jones C."/>
            <person name="Kamat A."/>
            <person name="Kaur A."/>
            <person name="Locke D.P."/>
            <person name="Madan A."/>
            <person name="Munson G."/>
            <person name="Jaffe D.B."/>
            <person name="Lui A."/>
            <person name="Macdonald P."/>
            <person name="Mauceli E."/>
            <person name="Naylor J.W."/>
            <person name="Nesbitt R."/>
            <person name="Nicol R."/>
            <person name="O'Leary S.B."/>
            <person name="Ratcliffe A."/>
            <person name="Rounsley S."/>
            <person name="She X."/>
            <person name="Sneddon K.M.B."/>
            <person name="Stewart S."/>
            <person name="Sougnez C."/>
            <person name="Stone S.M."/>
            <person name="Topham K."/>
            <person name="Vincent D."/>
            <person name="Wang S."/>
            <person name="Zimmer A.R."/>
            <person name="Birren B.W."/>
            <person name="Hood L."/>
            <person name="Lander E.S."/>
            <person name="Nusbaum C."/>
        </authorList>
    </citation>
    <scope>NUCLEOTIDE SEQUENCE [LARGE SCALE GENOMIC DNA]</scope>
</reference>
<sequence>MGWRFPSPSPRQASPVAPLLAAPTAVRSCSHCSGQREAISSHPLQLETPELGVCLPWHWEGWRQVRKITPSLPQPPGSQVPLEVTFHVRATLPHFRGGETKARRAREEGKLPSLGNAPAPRRRSVAWPAAEGSCAAPESSPPASEASLPAPESSLLVAGSGDLCADSF</sequence>
<feature type="transit peptide" description="Mitochondrion" evidence="1">
    <location>
        <begin position="1"/>
        <end position="29"/>
    </location>
</feature>
<feature type="chain" id="PRO_0000342686" description="Putative uncharacterized protein FLJ45275, mitochondrial">
    <location>
        <begin position="30"/>
        <end position="168"/>
    </location>
</feature>
<feature type="region of interest" description="Disordered" evidence="2">
    <location>
        <begin position="98"/>
        <end position="152"/>
    </location>
</feature>
<feature type="compositionally biased region" description="Basic and acidic residues" evidence="2">
    <location>
        <begin position="98"/>
        <end position="110"/>
    </location>
</feature>
<feature type="compositionally biased region" description="Low complexity" evidence="2">
    <location>
        <begin position="128"/>
        <end position="152"/>
    </location>
</feature>
<proteinExistence type="uncertain"/>
<organism>
    <name type="scientific">Homo sapiens</name>
    <name type="common">Human</name>
    <dbReference type="NCBI Taxonomy" id="9606"/>
    <lineage>
        <taxon>Eukaryota</taxon>
        <taxon>Metazoa</taxon>
        <taxon>Chordata</taxon>
        <taxon>Craniata</taxon>
        <taxon>Vertebrata</taxon>
        <taxon>Euteleostomi</taxon>
        <taxon>Mammalia</taxon>
        <taxon>Eutheria</taxon>
        <taxon>Euarchontoglires</taxon>
        <taxon>Primates</taxon>
        <taxon>Haplorrhini</taxon>
        <taxon>Catarrhini</taxon>
        <taxon>Hominidae</taxon>
        <taxon>Homo</taxon>
    </lineage>
</organism>
<accession>Q6ZSR3</accession>
<protein>
    <recommendedName>
        <fullName>Putative uncharacterized protein FLJ45275, mitochondrial</fullName>
    </recommendedName>
</protein>
<dbReference type="EMBL" id="AK127208">
    <property type="status" value="NOT_ANNOTATED_CDS"/>
    <property type="molecule type" value="mRNA"/>
</dbReference>
<dbReference type="EMBL" id="AC026150">
    <property type="status" value="NOT_ANNOTATED_CDS"/>
    <property type="molecule type" value="Genomic_DNA"/>
</dbReference>
<dbReference type="GlyGen" id="Q6ZSR3">
    <property type="glycosylation" value="1 site, 1 O-linked glycan (1 site)"/>
</dbReference>
<dbReference type="BioMuta" id="-"/>
<dbReference type="MassIVE" id="Q6ZSR3"/>
<dbReference type="neXtProt" id="NX_Q6ZSR3"/>
<dbReference type="InParanoid" id="Q6ZSR3"/>
<dbReference type="PAN-GO" id="Q6ZSR3">
    <property type="GO annotations" value="0 GO annotations based on evolutionary models"/>
</dbReference>
<dbReference type="Pharos" id="Q6ZSR3">
    <property type="development level" value="Tdark"/>
</dbReference>
<dbReference type="Proteomes" id="UP000005640">
    <property type="component" value="Unplaced"/>
</dbReference>
<dbReference type="RNAct" id="Q6ZSR3">
    <property type="molecule type" value="protein"/>
</dbReference>
<dbReference type="GO" id="GO:0005739">
    <property type="term" value="C:mitochondrion"/>
    <property type="evidence" value="ECO:0007669"/>
    <property type="project" value="UniProtKB-SubCell"/>
</dbReference>
<keyword id="KW-0496">Mitochondrion</keyword>
<keyword id="KW-1185">Reference proteome</keyword>
<keyword id="KW-0809">Transit peptide</keyword>
<name>YO027_HUMAN</name>
<comment type="subcellular location">
    <subcellularLocation>
        <location evidence="3">Mitochondrion</location>
    </subcellularLocation>
</comment>
<comment type="caution">
    <text evidence="3">Product of a dubious CDS prediction.</text>
</comment>
<evidence type="ECO:0000255" key="1"/>
<evidence type="ECO:0000256" key="2">
    <source>
        <dbReference type="SAM" id="MobiDB-lite"/>
    </source>
</evidence>
<evidence type="ECO:0000305" key="3"/>